<organism>
    <name type="scientific">Caenorhabditis elegans</name>
    <dbReference type="NCBI Taxonomy" id="6239"/>
    <lineage>
        <taxon>Eukaryota</taxon>
        <taxon>Metazoa</taxon>
        <taxon>Ecdysozoa</taxon>
        <taxon>Nematoda</taxon>
        <taxon>Chromadorea</taxon>
        <taxon>Rhabditida</taxon>
        <taxon>Rhabditina</taxon>
        <taxon>Rhabditomorpha</taxon>
        <taxon>Rhabditoidea</taxon>
        <taxon>Rhabditidae</taxon>
        <taxon>Peloderinae</taxon>
        <taxon>Caenorhabditis</taxon>
    </lineage>
</organism>
<name>ASM1_CAEEL</name>
<proteinExistence type="evidence at protein level"/>
<gene>
    <name type="primary">asm-1</name>
    <name type="ORF">B0252.2</name>
</gene>
<evidence type="ECO:0000250" key="1">
    <source>
        <dbReference type="UniProtKB" id="P17405"/>
    </source>
</evidence>
<evidence type="ECO:0000250" key="2">
    <source>
        <dbReference type="UniProtKB" id="Q92484"/>
    </source>
</evidence>
<evidence type="ECO:0000255" key="3"/>
<evidence type="ECO:0000255" key="4">
    <source>
        <dbReference type="PROSITE-ProRule" id="PRU00415"/>
    </source>
</evidence>
<evidence type="ECO:0000269" key="5">
    <source>
    </source>
</evidence>
<evidence type="ECO:0000303" key="6">
    <source>
    </source>
</evidence>
<evidence type="ECO:0000305" key="7"/>
<evidence type="ECO:0000305" key="8">
    <source>
    </source>
</evidence>
<protein>
    <recommendedName>
        <fullName>Sphingomyelin phosphodiesterase 1</fullName>
        <ecNumber evidence="5">3.1.4.12</ecNumber>
    </recommendedName>
    <alternativeName>
        <fullName>Acid sphingomyelinase 1</fullName>
        <shortName evidence="6">ASM-1</shortName>
    </alternativeName>
</protein>
<dbReference type="EC" id="3.1.4.12" evidence="5"/>
<dbReference type="EMBL" id="FO080139">
    <property type="protein sequence ID" value="CCD61537.1"/>
    <property type="molecule type" value="Genomic_DNA"/>
</dbReference>
<dbReference type="PIR" id="T15291">
    <property type="entry name" value="T15291"/>
</dbReference>
<dbReference type="RefSeq" id="NP_495415.2">
    <property type="nucleotide sequence ID" value="NM_063014.6"/>
</dbReference>
<dbReference type="SMR" id="Q10916"/>
<dbReference type="FunCoup" id="Q10916">
    <property type="interactions" value="130"/>
</dbReference>
<dbReference type="STRING" id="6239.B0252.2.2"/>
<dbReference type="SwissLipids" id="SLP:000000009"/>
<dbReference type="GlyCosmos" id="Q10916">
    <property type="glycosylation" value="5 sites, No reported glycans"/>
</dbReference>
<dbReference type="PaxDb" id="6239-B0252.2"/>
<dbReference type="PeptideAtlas" id="Q10916"/>
<dbReference type="EnsemblMetazoa" id="B0252.2.1">
    <property type="protein sequence ID" value="B0252.2.1"/>
    <property type="gene ID" value="WBGene00000211"/>
</dbReference>
<dbReference type="GeneID" id="174131"/>
<dbReference type="KEGG" id="cel:CELE_B0252.2"/>
<dbReference type="UCSC" id="B0252.2">
    <property type="organism name" value="c. elegans"/>
</dbReference>
<dbReference type="AGR" id="WB:WBGene00000211"/>
<dbReference type="CTD" id="174131"/>
<dbReference type="WormBase" id="B0252.2">
    <property type="protein sequence ID" value="CE30230"/>
    <property type="gene ID" value="WBGene00000211"/>
    <property type="gene designation" value="asm-1"/>
</dbReference>
<dbReference type="eggNOG" id="KOG3770">
    <property type="taxonomic scope" value="Eukaryota"/>
</dbReference>
<dbReference type="GeneTree" id="ENSGT00950000183182"/>
<dbReference type="HOGENOM" id="CLU_014743_3_0_1"/>
<dbReference type="InParanoid" id="Q10916"/>
<dbReference type="OMA" id="VWSQTRK"/>
<dbReference type="OrthoDB" id="282973at2759"/>
<dbReference type="PhylomeDB" id="Q10916"/>
<dbReference type="UniPathway" id="UPA00222"/>
<dbReference type="PRO" id="PR:Q10916"/>
<dbReference type="Proteomes" id="UP000001940">
    <property type="component" value="Chromosome II"/>
</dbReference>
<dbReference type="Bgee" id="WBGene00000211">
    <property type="expression patterns" value="Expressed in embryo and 3 other cell types or tissues"/>
</dbReference>
<dbReference type="GO" id="GO:0005576">
    <property type="term" value="C:extracellular region"/>
    <property type="evidence" value="ECO:0000314"/>
    <property type="project" value="UniProtKB"/>
</dbReference>
<dbReference type="GO" id="GO:0005615">
    <property type="term" value="C:extracellular space"/>
    <property type="evidence" value="ECO:0000318"/>
    <property type="project" value="GO_Central"/>
</dbReference>
<dbReference type="GO" id="GO:0005764">
    <property type="term" value="C:lysosome"/>
    <property type="evidence" value="ECO:0000314"/>
    <property type="project" value="WormBase"/>
</dbReference>
<dbReference type="GO" id="GO:0016020">
    <property type="term" value="C:membrane"/>
    <property type="evidence" value="ECO:0007669"/>
    <property type="project" value="GOC"/>
</dbReference>
<dbReference type="GO" id="GO:0061750">
    <property type="term" value="F:acid sphingomyelin phosphodiesterase activity"/>
    <property type="evidence" value="ECO:0000318"/>
    <property type="project" value="GO_Central"/>
</dbReference>
<dbReference type="GO" id="GO:0016798">
    <property type="term" value="F:hydrolase activity, acting on glycosyl bonds"/>
    <property type="evidence" value="ECO:0007669"/>
    <property type="project" value="UniProtKB-KW"/>
</dbReference>
<dbReference type="GO" id="GO:0046872">
    <property type="term" value="F:metal ion binding"/>
    <property type="evidence" value="ECO:0007669"/>
    <property type="project" value="UniProtKB-KW"/>
</dbReference>
<dbReference type="GO" id="GO:0004767">
    <property type="term" value="F:sphingomyelin phosphodiesterase activity"/>
    <property type="evidence" value="ECO:0000314"/>
    <property type="project" value="UniProtKB"/>
</dbReference>
<dbReference type="GO" id="GO:0046513">
    <property type="term" value="P:ceramide biosynthetic process"/>
    <property type="evidence" value="ECO:0000314"/>
    <property type="project" value="UniProtKB"/>
</dbReference>
<dbReference type="GO" id="GO:0006685">
    <property type="term" value="P:sphingomyelin catabolic process"/>
    <property type="evidence" value="ECO:0000314"/>
    <property type="project" value="UniProtKB"/>
</dbReference>
<dbReference type="CDD" id="cd00842">
    <property type="entry name" value="MPP_ASMase"/>
    <property type="match status" value="1"/>
</dbReference>
<dbReference type="FunFam" id="3.60.21.10:FF:000077">
    <property type="entry name" value="Sphingomyelin phosphodiesterase"/>
    <property type="match status" value="1"/>
</dbReference>
<dbReference type="Gene3D" id="3.60.21.10">
    <property type="match status" value="1"/>
</dbReference>
<dbReference type="InterPro" id="IPR045473">
    <property type="entry name" value="ASM_C"/>
</dbReference>
<dbReference type="InterPro" id="IPR041805">
    <property type="entry name" value="ASMase/PPN1_MPP"/>
</dbReference>
<dbReference type="InterPro" id="IPR004843">
    <property type="entry name" value="Calcineurin-like_PHP_ApaH"/>
</dbReference>
<dbReference type="InterPro" id="IPR029052">
    <property type="entry name" value="Metallo-depent_PP-like"/>
</dbReference>
<dbReference type="InterPro" id="IPR011001">
    <property type="entry name" value="Saposin-like"/>
</dbReference>
<dbReference type="InterPro" id="IPR008139">
    <property type="entry name" value="SaposinB_dom"/>
</dbReference>
<dbReference type="InterPro" id="IPR011160">
    <property type="entry name" value="Sphingomy_PDE"/>
</dbReference>
<dbReference type="PANTHER" id="PTHR10340">
    <property type="entry name" value="SPHINGOMYELIN PHOSPHODIESTERASE"/>
    <property type="match status" value="1"/>
</dbReference>
<dbReference type="PANTHER" id="PTHR10340:SF34">
    <property type="entry name" value="SPHINGOMYELIN PHOSPHODIESTERASE"/>
    <property type="match status" value="1"/>
</dbReference>
<dbReference type="Pfam" id="PF19272">
    <property type="entry name" value="ASMase_C"/>
    <property type="match status" value="1"/>
</dbReference>
<dbReference type="Pfam" id="PF00149">
    <property type="entry name" value="Metallophos"/>
    <property type="match status" value="1"/>
</dbReference>
<dbReference type="PIRSF" id="PIRSF000948">
    <property type="entry name" value="Sphingomy_PDE"/>
    <property type="match status" value="1"/>
</dbReference>
<dbReference type="SMART" id="SM00741">
    <property type="entry name" value="SapB"/>
    <property type="match status" value="1"/>
</dbReference>
<dbReference type="SUPFAM" id="SSF56300">
    <property type="entry name" value="Metallo-dependent phosphatases"/>
    <property type="match status" value="1"/>
</dbReference>
<dbReference type="SUPFAM" id="SSF47862">
    <property type="entry name" value="Saposin"/>
    <property type="match status" value="1"/>
</dbReference>
<dbReference type="PROSITE" id="PS50015">
    <property type="entry name" value="SAP_B"/>
    <property type="match status" value="1"/>
</dbReference>
<reference key="1">
    <citation type="journal article" date="1998" name="J. Biol. Chem.">
        <title>Caenorhabditis elegans contains two distinct acid sphingomyelinases.</title>
        <authorList>
            <person name="Lin X."/>
            <person name="Hengartner M.O."/>
            <person name="Kolesnick R."/>
        </authorList>
    </citation>
    <scope>NUCLEOTIDE SEQUENCE [GENOMIC DNA]</scope>
    <scope>FUNCTION</scope>
    <scope>CATALYTIC ACTIVITY</scope>
    <scope>PATHWAY</scope>
    <scope>SUBCELLULAR LOCATION</scope>
    <scope>DEVELOPMENTAL STAGE</scope>
    <scope>BIOPHYSICOCHEMICAL PROPERTIES</scope>
</reference>
<reference key="2">
    <citation type="journal article" date="1998" name="Science">
        <title>Genome sequence of the nematode C. elegans: a platform for investigating biology.</title>
        <authorList>
            <consortium name="The C. elegans sequencing consortium"/>
        </authorList>
    </citation>
    <scope>NUCLEOTIDE SEQUENCE [LARGE SCALE GENOMIC DNA]</scope>
    <source>
        <strain>Bristol N2</strain>
    </source>
</reference>
<keyword id="KW-1015">Disulfide bond</keyword>
<keyword id="KW-0325">Glycoprotein</keyword>
<keyword id="KW-0326">Glycosidase</keyword>
<keyword id="KW-0378">Hydrolase</keyword>
<keyword id="KW-0443">Lipid metabolism</keyword>
<keyword id="KW-0479">Metal-binding</keyword>
<keyword id="KW-1185">Reference proteome</keyword>
<keyword id="KW-0964">Secreted</keyword>
<keyword id="KW-0732">Signal</keyword>
<keyword id="KW-0746">Sphingolipid metabolism</keyword>
<keyword id="KW-0862">Zinc</keyword>
<sequence>MRIIYLISTVLLIYTNATVLRTKESIQNKVTYDKYGFQPLCISCTGLISVASFFLKFDVSEPVILEFATIVCKLFAKQPWAVCDGISSQFRDEFFYVFRRLANESPSQICGIILPDCADPTDPSESGWMVALPPKPKRTRISKKKVQKKPNMSMSQNLNVLQLTDLHVDFEYKYPSEANCDDPVCCRVSVSEPKKAAGYWGSVGKCDIPFWTVENMLSHINKTHMIDMVIMTGDYINHVDWEYSIEEHLSVLRKLHRLVQNTFPSTPIYWALGNHEGVPVNSFAPHSVDERFWPTWLYKEFQTMSGPWLSEGAKDSLLKRGSYSTQVMDGLKLITLNTGFCEVTNFFLYLNQSDPDSSMSWFVKELFESEKKGEQVYVLAHIPPGDSECLEGWAFNYYRVIQRFSSTIAAQFFGHDHLDYFTVFYEDMHNVSSKPISVGYASPSVTTFEYQNPAYRIYEIDPYNKFKIVDFTTYYADLEKATEDKKPVWEKLYSARQAHGMDDLSPLSWNKVIQKLFTSEKKREKFYQYAFRNFSPQCDSTCQMQLMCNLRMGHHNSTLYCPTF</sequence>
<feature type="signal peptide" evidence="3">
    <location>
        <begin position="1"/>
        <end position="17"/>
    </location>
</feature>
<feature type="chain" id="PRO_0000002325" description="Sphingomyelin phosphodiesterase 1">
    <location>
        <begin position="18"/>
        <end position="564"/>
    </location>
</feature>
<feature type="domain" description="Saposin B-type" evidence="4">
    <location>
        <begin position="37"/>
        <end position="121"/>
    </location>
</feature>
<feature type="binding site" evidence="1">
    <location>
        <position position="165"/>
    </location>
    <ligand>
        <name>Zn(2+)</name>
        <dbReference type="ChEBI" id="CHEBI:29105"/>
        <label>1</label>
    </ligand>
</feature>
<feature type="binding site" evidence="1">
    <location>
        <position position="167"/>
    </location>
    <ligand>
        <name>Zn(2+)</name>
        <dbReference type="ChEBI" id="CHEBI:29105"/>
        <label>1</label>
    </ligand>
</feature>
<feature type="binding site" evidence="1">
    <location>
        <position position="234"/>
    </location>
    <ligand>
        <name>Zn(2+)</name>
        <dbReference type="ChEBI" id="CHEBI:29105"/>
        <label>1</label>
    </ligand>
</feature>
<feature type="binding site" evidence="1">
    <location>
        <position position="234"/>
    </location>
    <ligand>
        <name>Zn(2+)</name>
        <dbReference type="ChEBI" id="CHEBI:29105"/>
        <label>2</label>
    </ligand>
</feature>
<feature type="binding site" evidence="1">
    <location>
        <position position="274"/>
    </location>
    <ligand>
        <name>Zn(2+)</name>
        <dbReference type="ChEBI" id="CHEBI:29105"/>
        <label>2</label>
    </ligand>
</feature>
<feature type="binding site" evidence="1">
    <location>
        <position position="381"/>
    </location>
    <ligand>
        <name>Zn(2+)</name>
        <dbReference type="ChEBI" id="CHEBI:29105"/>
        <label>2</label>
    </ligand>
</feature>
<feature type="binding site" evidence="1">
    <location>
        <position position="415"/>
    </location>
    <ligand>
        <name>Zn(2+)</name>
        <dbReference type="ChEBI" id="CHEBI:29105"/>
        <label>2</label>
    </ligand>
</feature>
<feature type="binding site" evidence="1">
    <location>
        <position position="417"/>
    </location>
    <ligand>
        <name>Zn(2+)</name>
        <dbReference type="ChEBI" id="CHEBI:29105"/>
        <label>1</label>
    </ligand>
</feature>
<feature type="glycosylation site" description="N-linked (GlcNAc...) asparagine" evidence="4">
    <location>
        <position position="151"/>
    </location>
</feature>
<feature type="glycosylation site" description="N-linked (GlcNAc...) asparagine" evidence="4">
    <location>
        <position position="221"/>
    </location>
</feature>
<feature type="glycosylation site" description="N-linked (GlcNAc...) asparagine" evidence="4">
    <location>
        <position position="351"/>
    </location>
</feature>
<feature type="glycosylation site" description="N-linked (GlcNAc...) asparagine" evidence="4">
    <location>
        <position position="430"/>
    </location>
</feature>
<feature type="glycosylation site" description="N-linked (GlcNAc...) asparagine" evidence="4">
    <location>
        <position position="556"/>
    </location>
</feature>
<feature type="disulfide bond" evidence="4">
    <location>
        <begin position="41"/>
        <end position="117"/>
    </location>
</feature>
<feature type="disulfide bond" evidence="4">
    <location>
        <begin position="44"/>
        <end position="110"/>
    </location>
</feature>
<feature type="disulfide bond" evidence="4">
    <location>
        <begin position="72"/>
        <end position="83"/>
    </location>
</feature>
<feature type="disulfide bond" evidence="4">
    <location>
        <begin position="180"/>
        <end position="185"/>
    </location>
</feature>
<feature type="disulfide bond" evidence="4">
    <location>
        <begin position="186"/>
        <end position="206"/>
    </location>
</feature>
<feature type="disulfide bond" evidence="4">
    <location>
        <begin position="341"/>
        <end position="389"/>
    </location>
</feature>
<feature type="disulfide bond" evidence="4">
    <location>
        <begin position="538"/>
        <end position="542"/>
    </location>
</feature>
<feature type="disulfide bond" evidence="4">
    <location>
        <begin position="548"/>
        <end position="561"/>
    </location>
</feature>
<accession>Q10916</accession>
<comment type="function">
    <text evidence="5">Sphingomyelin phosphodiesterase (sphingomyelinase) that converts sphingomyelin to ceramide (N-acyl-sphingoid base) and phosphocholine at acidic pH. Displays its enzymatic activity when secreted. May play distinct roles in signaling.</text>
</comment>
<comment type="catalytic activity">
    <reaction evidence="5">
        <text>a sphingomyelin + H2O = phosphocholine + an N-acylsphing-4-enine + H(+)</text>
        <dbReference type="Rhea" id="RHEA:19253"/>
        <dbReference type="ChEBI" id="CHEBI:15377"/>
        <dbReference type="ChEBI" id="CHEBI:15378"/>
        <dbReference type="ChEBI" id="CHEBI:17636"/>
        <dbReference type="ChEBI" id="CHEBI:52639"/>
        <dbReference type="ChEBI" id="CHEBI:295975"/>
        <dbReference type="EC" id="3.1.4.12"/>
    </reaction>
    <physiologicalReaction direction="left-to-right" evidence="5">
        <dbReference type="Rhea" id="RHEA:19254"/>
    </physiologicalReaction>
</comment>
<comment type="catalytic activity">
    <reaction evidence="8">
        <text>an N-acyl-15-methylhexadecasphing-4-enine-1-phosphocholine + H2O = an N-acyl-15-methylhexadecasphing-4-enine + phosphocholine + H(+)</text>
        <dbReference type="Rhea" id="RHEA:34739"/>
        <dbReference type="ChEBI" id="CHEBI:15377"/>
        <dbReference type="ChEBI" id="CHEBI:15378"/>
        <dbReference type="ChEBI" id="CHEBI:70775"/>
        <dbReference type="ChEBI" id="CHEBI:70846"/>
        <dbReference type="ChEBI" id="CHEBI:295975"/>
    </reaction>
    <physiologicalReaction direction="left-to-right" evidence="8">
        <dbReference type="Rhea" id="RHEA:34740"/>
    </physiologicalReaction>
</comment>
<comment type="cofactor">
    <cofactor evidence="2">
        <name>Zn(2+)</name>
        <dbReference type="ChEBI" id="CHEBI:29105"/>
    </cofactor>
    <text evidence="2">Binds 2 Zn(2+) per subunit.</text>
</comment>
<comment type="biophysicochemical properties">
    <kinetics>
        <KM evidence="5">92 uM for sphingomyelin (at pH 5.0)</KM>
        <Vmax evidence="5">2.9 mmol/h/mg enzyme with sphingomyelin as substrate (at pH 5.0)</Vmax>
    </kinetics>
</comment>
<comment type="pathway">
    <text evidence="5">Lipid metabolism; sphingolipid metabolism.</text>
</comment>
<comment type="subcellular location">
    <subcellularLocation>
        <location evidence="5">Secreted</location>
    </subcellularLocation>
</comment>
<comment type="developmental stage">
    <text evidence="5">Preferentially expressed in embryos, lower expression in later development.</text>
</comment>
<comment type="miscellaneous">
    <text evidence="1 5">There are two types of sphingomyelinases: asm (acid), and nsm (neutral). Only acid sphingomyelinases have been found in worms.</text>
</comment>
<comment type="miscellaneous">
    <text evidence="5">Does not require zinc ions as a cofactor.</text>
</comment>
<comment type="similarity">
    <text evidence="7">Belongs to the acid sphingomyelinase family.</text>
</comment>